<sequence length="544" mass="58918">MGSPEDDLIGIPFPDHSSELLSCLNEQRQLGHLCDLTIRTQGLEYRTHRAVLAACSHYFKKLFTEGGGGTVMGTGGGGTASGGAGAGVCELDFVGPEALGALLEFAYTATLTTSSANMPAVLQAARLLEIPCVIAACMEILQGSGLEAPSPDEDDCERARQYLEAFATATTTASTSGMPNGEDSPPQVPLLPPPPPPPRPVARRSRKPRKAFLQTKGARANHLVPEAPTVLTHPLTYEEEEMVGRLGNSGGSGLGDSYSPPTGAASPAEGPLNYEVFEGEEEEEEMAYPPGYGLAQSNEPSLSPEELGSDEDPIDPDLMAYLSSLHQDALTPGLDGQDKLVRKRRSQMPQECPVCHKIIHGAGKLPRHMRTHTGEKPFACEVCGVRFTRNDKLKIHMRKHTGERPYSCPHCPARFLHSYDLKNHMHLHTGDRPYECHLCHKAFAKEDHLQRHLKGQNCLEVRTRRRRKDDVAAPHYPPPSTTTSSPAGLDLSNGHLDTFHLSLARFWEQSATTGPPVTTQGPPEEEEEEGTPTTPQAEGAMESS</sequence>
<dbReference type="EMBL" id="BC046533">
    <property type="protein sequence ID" value="AAH46533.1"/>
    <property type="molecule type" value="mRNA"/>
</dbReference>
<dbReference type="EMBL" id="L35307">
    <property type="protein sequence ID" value="AAA61956.1"/>
    <property type="status" value="ALT_SEQ"/>
    <property type="molecule type" value="mRNA"/>
</dbReference>
<dbReference type="EMBL" id="Z36549">
    <property type="protein sequence ID" value="CAA85307.1"/>
    <property type="status" value="ALT_SEQ"/>
    <property type="molecule type" value="mRNA"/>
</dbReference>
<dbReference type="CCDS" id="CCDS17504.1"/>
<dbReference type="PIR" id="I49603">
    <property type="entry name" value="I49603"/>
</dbReference>
<dbReference type="RefSeq" id="NP_001342135.2">
    <property type="nucleotide sequence ID" value="NM_001355206.2"/>
</dbReference>
<dbReference type="RefSeq" id="NP_001342140.1">
    <property type="nucleotide sequence ID" value="NM_001355211.2"/>
</dbReference>
<dbReference type="RefSeq" id="NP_001342141.1">
    <property type="nucleotide sequence ID" value="NM_001355212.2"/>
</dbReference>
<dbReference type="RefSeq" id="NP_001397607.1">
    <property type="nucleotide sequence ID" value="NM_001410678.1"/>
</dbReference>
<dbReference type="RefSeq" id="NP_001397608.1">
    <property type="nucleotide sequence ID" value="NM_001410679.1"/>
</dbReference>
<dbReference type="RefSeq" id="NP_001397609.1">
    <property type="nucleotide sequence ID" value="NM_001410680.1"/>
</dbReference>
<dbReference type="RefSeq" id="NP_001397610.1">
    <property type="nucleotide sequence ID" value="NM_001410681.1"/>
</dbReference>
<dbReference type="RefSeq" id="NP_033591.2">
    <property type="nucleotide sequence ID" value="NM_009565.4"/>
</dbReference>
<dbReference type="RefSeq" id="XP_006501376.1">
    <property type="nucleotide sequence ID" value="XM_006501313.2"/>
</dbReference>
<dbReference type="RefSeq" id="XP_006501377.1">
    <property type="nucleotide sequence ID" value="XM_006501314.2"/>
</dbReference>
<dbReference type="RefSeq" id="XP_006501379.1">
    <property type="nucleotide sequence ID" value="XM_006501316.2"/>
</dbReference>
<dbReference type="RefSeq" id="XP_006501380.1">
    <property type="nucleotide sequence ID" value="XM_006501317.3"/>
</dbReference>
<dbReference type="RefSeq" id="XP_006501381.1">
    <property type="nucleotide sequence ID" value="XM_006501318.3"/>
</dbReference>
<dbReference type="RefSeq" id="XP_006501382.1">
    <property type="nucleotide sequence ID" value="XM_006501319.3"/>
</dbReference>
<dbReference type="SMR" id="Q64321"/>
<dbReference type="BioGRID" id="204677">
    <property type="interactions" value="324"/>
</dbReference>
<dbReference type="FunCoup" id="Q64321">
    <property type="interactions" value="1314"/>
</dbReference>
<dbReference type="IntAct" id="Q64321">
    <property type="interactions" value="4"/>
</dbReference>
<dbReference type="MINT" id="Q64321"/>
<dbReference type="STRING" id="10090.ENSMUSP00000103058"/>
<dbReference type="iPTMnet" id="Q64321"/>
<dbReference type="PhosphoSitePlus" id="Q64321"/>
<dbReference type="PaxDb" id="10090-ENSMUSP00000029677"/>
<dbReference type="ProteomicsDB" id="275339"/>
<dbReference type="Antibodypedia" id="20407">
    <property type="antibodies" value="306 antibodies from 39 providers"/>
</dbReference>
<dbReference type="Ensembl" id="ENSMUST00000029677.9">
    <property type="protein sequence ID" value="ENSMUSP00000029677.9"/>
    <property type="gene ID" value="ENSMUSG00000028042.16"/>
</dbReference>
<dbReference type="Ensembl" id="ENSMUST00000107432.8">
    <property type="protein sequence ID" value="ENSMUSP00000103055.2"/>
    <property type="gene ID" value="ENSMUSG00000028042.16"/>
</dbReference>
<dbReference type="Ensembl" id="ENSMUST00000107433.8">
    <property type="protein sequence ID" value="ENSMUSP00000103056.2"/>
    <property type="gene ID" value="ENSMUSG00000028042.16"/>
</dbReference>
<dbReference type="Ensembl" id="ENSMUST00000107435.8">
    <property type="protein sequence ID" value="ENSMUSP00000103058.2"/>
    <property type="gene ID" value="ENSMUSG00000028042.16"/>
</dbReference>
<dbReference type="GeneID" id="22724"/>
<dbReference type="KEGG" id="mmu:22724"/>
<dbReference type="UCSC" id="uc008pza.1">
    <property type="organism name" value="mouse"/>
</dbReference>
<dbReference type="AGR" id="MGI:102755"/>
<dbReference type="CTD" id="51043"/>
<dbReference type="MGI" id="MGI:102755">
    <property type="gene designation" value="Zbtb7b"/>
</dbReference>
<dbReference type="VEuPathDB" id="HostDB:ENSMUSG00000028042"/>
<dbReference type="eggNOG" id="KOG1721">
    <property type="taxonomic scope" value="Eukaryota"/>
</dbReference>
<dbReference type="GeneTree" id="ENSGT00940000160219"/>
<dbReference type="HOGENOM" id="CLU_025627_0_0_1"/>
<dbReference type="InParanoid" id="Q64321"/>
<dbReference type="OMA" id="SPEHHEL"/>
<dbReference type="OrthoDB" id="10004641at2759"/>
<dbReference type="PhylomeDB" id="Q64321"/>
<dbReference type="TreeFam" id="TF331824"/>
<dbReference type="BioGRID-ORCS" id="22724">
    <property type="hits" value="4 hits in 79 CRISPR screens"/>
</dbReference>
<dbReference type="ChiTaRS" id="Zbtb7b">
    <property type="organism name" value="mouse"/>
</dbReference>
<dbReference type="PRO" id="PR:Q64321"/>
<dbReference type="Proteomes" id="UP000000589">
    <property type="component" value="Chromosome 3"/>
</dbReference>
<dbReference type="RNAct" id="Q64321">
    <property type="molecule type" value="protein"/>
</dbReference>
<dbReference type="Bgee" id="ENSMUSG00000028042">
    <property type="expression patterns" value="Expressed in granulocyte and 185 other cell types or tissues"/>
</dbReference>
<dbReference type="ExpressionAtlas" id="Q64321">
    <property type="expression patterns" value="baseline and differential"/>
</dbReference>
<dbReference type="GO" id="GO:0005654">
    <property type="term" value="C:nucleoplasm"/>
    <property type="evidence" value="ECO:0007669"/>
    <property type="project" value="Ensembl"/>
</dbReference>
<dbReference type="GO" id="GO:0005634">
    <property type="term" value="C:nucleus"/>
    <property type="evidence" value="ECO:0000314"/>
    <property type="project" value="UniProtKB"/>
</dbReference>
<dbReference type="GO" id="GO:0000987">
    <property type="term" value="F:cis-regulatory region sequence-specific DNA binding"/>
    <property type="evidence" value="ECO:0000314"/>
    <property type="project" value="MGI"/>
</dbReference>
<dbReference type="GO" id="GO:0003677">
    <property type="term" value="F:DNA binding"/>
    <property type="evidence" value="ECO:0000314"/>
    <property type="project" value="MGI"/>
</dbReference>
<dbReference type="GO" id="GO:0001228">
    <property type="term" value="F:DNA-binding transcription activator activity, RNA polymerase II-specific"/>
    <property type="evidence" value="ECO:0000314"/>
    <property type="project" value="NTNU_SB"/>
</dbReference>
<dbReference type="GO" id="GO:0003700">
    <property type="term" value="F:DNA-binding transcription factor activity"/>
    <property type="evidence" value="ECO:0000314"/>
    <property type="project" value="MGI"/>
</dbReference>
<dbReference type="GO" id="GO:0001217">
    <property type="term" value="F:DNA-binding transcription repressor activity"/>
    <property type="evidence" value="ECO:0000315"/>
    <property type="project" value="UniProtKB"/>
</dbReference>
<dbReference type="GO" id="GO:0042826">
    <property type="term" value="F:histone deacetylase binding"/>
    <property type="evidence" value="ECO:0000353"/>
    <property type="project" value="UniProtKB"/>
</dbReference>
<dbReference type="GO" id="GO:0042802">
    <property type="term" value="F:identical protein binding"/>
    <property type="evidence" value="ECO:0000314"/>
    <property type="project" value="MGI"/>
</dbReference>
<dbReference type="GO" id="GO:0042803">
    <property type="term" value="F:protein homodimerization activity"/>
    <property type="evidence" value="ECO:0000353"/>
    <property type="project" value="UniProtKB"/>
</dbReference>
<dbReference type="GO" id="GO:0000978">
    <property type="term" value="F:RNA polymerase II cis-regulatory region sequence-specific DNA binding"/>
    <property type="evidence" value="ECO:0000314"/>
    <property type="project" value="NTNU_SB"/>
</dbReference>
<dbReference type="GO" id="GO:0008270">
    <property type="term" value="F:zinc ion binding"/>
    <property type="evidence" value="ECO:0007669"/>
    <property type="project" value="UniProtKB-KW"/>
</dbReference>
<dbReference type="GO" id="GO:1990845">
    <property type="term" value="P:adaptive thermogenesis"/>
    <property type="evidence" value="ECO:0000315"/>
    <property type="project" value="UniProtKB"/>
</dbReference>
<dbReference type="GO" id="GO:0007595">
    <property type="term" value="P:lactation"/>
    <property type="evidence" value="ECO:0000315"/>
    <property type="project" value="UniProtKB"/>
</dbReference>
<dbReference type="GO" id="GO:0043377">
    <property type="term" value="P:negative regulation of CD8-positive, alpha-beta T cell differentiation"/>
    <property type="evidence" value="ECO:0000315"/>
    <property type="project" value="UniProtKB"/>
</dbReference>
<dbReference type="GO" id="GO:0010629">
    <property type="term" value="P:negative regulation of gene expression"/>
    <property type="evidence" value="ECO:0000314"/>
    <property type="project" value="MGI"/>
</dbReference>
<dbReference type="GO" id="GO:0051141">
    <property type="term" value="P:negative regulation of NK T cell proliferation"/>
    <property type="evidence" value="ECO:0000315"/>
    <property type="project" value="UniProtKB"/>
</dbReference>
<dbReference type="GO" id="GO:2000320">
    <property type="term" value="P:negative regulation of T-helper 17 cell differentiation"/>
    <property type="evidence" value="ECO:0000315"/>
    <property type="project" value="MGI"/>
</dbReference>
<dbReference type="GO" id="GO:0000122">
    <property type="term" value="P:negative regulation of transcription by RNA polymerase II"/>
    <property type="evidence" value="ECO:0000315"/>
    <property type="project" value="UniProtKB"/>
</dbReference>
<dbReference type="GO" id="GO:0001865">
    <property type="term" value="P:NK T cell differentiation"/>
    <property type="evidence" value="ECO:0000315"/>
    <property type="project" value="UniProtKB"/>
</dbReference>
<dbReference type="GO" id="GO:0090336">
    <property type="term" value="P:positive regulation of brown fat cell differentiation"/>
    <property type="evidence" value="ECO:0000315"/>
    <property type="project" value="UniProtKB"/>
</dbReference>
<dbReference type="GO" id="GO:0043372">
    <property type="term" value="P:positive regulation of CD4-positive, alpha-beta T cell differentiation"/>
    <property type="evidence" value="ECO:0000315"/>
    <property type="project" value="UniProtKB"/>
</dbReference>
<dbReference type="GO" id="GO:0120162">
    <property type="term" value="P:positive regulation of cold-induced thermogenesis"/>
    <property type="evidence" value="ECO:0000315"/>
    <property type="project" value="YuBioLab"/>
</dbReference>
<dbReference type="GO" id="GO:0010628">
    <property type="term" value="P:positive regulation of gene expression"/>
    <property type="evidence" value="ECO:0000314"/>
    <property type="project" value="UniProtKB"/>
</dbReference>
<dbReference type="GO" id="GO:0046628">
    <property type="term" value="P:positive regulation of insulin receptor signaling pathway"/>
    <property type="evidence" value="ECO:0000315"/>
    <property type="project" value="UniProtKB"/>
</dbReference>
<dbReference type="GO" id="GO:0032740">
    <property type="term" value="P:positive regulation of interleukin-17 production"/>
    <property type="evidence" value="ECO:0000315"/>
    <property type="project" value="UniProtKB"/>
</dbReference>
<dbReference type="GO" id="GO:2000640">
    <property type="term" value="P:positive regulation of SREBP signaling pathway"/>
    <property type="evidence" value="ECO:0000315"/>
    <property type="project" value="UniProtKB"/>
</dbReference>
<dbReference type="GO" id="GO:0045944">
    <property type="term" value="P:positive regulation of transcription by RNA polymerase II"/>
    <property type="evidence" value="ECO:0000314"/>
    <property type="project" value="MGI"/>
</dbReference>
<dbReference type="GO" id="GO:0043376">
    <property type="term" value="P:regulation of CD8-positive, alpha-beta T cell differentiation"/>
    <property type="evidence" value="ECO:0000315"/>
    <property type="project" value="MGI"/>
</dbReference>
<dbReference type="GO" id="GO:0010468">
    <property type="term" value="P:regulation of gene expression"/>
    <property type="evidence" value="ECO:0000315"/>
    <property type="project" value="MGI"/>
</dbReference>
<dbReference type="GO" id="GO:0045622">
    <property type="term" value="P:regulation of T-helper cell differentiation"/>
    <property type="evidence" value="ECO:0000315"/>
    <property type="project" value="MGI"/>
</dbReference>
<dbReference type="GO" id="GO:0032868">
    <property type="term" value="P:response to insulin"/>
    <property type="evidence" value="ECO:0000315"/>
    <property type="project" value="UniProtKB"/>
</dbReference>
<dbReference type="CDD" id="cd18327">
    <property type="entry name" value="BTB_POZ_ZBTB7B_ZBTB15"/>
    <property type="match status" value="1"/>
</dbReference>
<dbReference type="FunFam" id="3.30.160.60:FF:000115">
    <property type="entry name" value="Zinc finger and BTB domain containing 7C"/>
    <property type="match status" value="1"/>
</dbReference>
<dbReference type="FunFam" id="3.30.160.60:FF:000572">
    <property type="entry name" value="Zinc finger and BTB domain containing 7C"/>
    <property type="match status" value="1"/>
</dbReference>
<dbReference type="FunFam" id="3.30.160.60:FF:000673">
    <property type="entry name" value="Zinc finger and BTB domain-containing 7B"/>
    <property type="match status" value="1"/>
</dbReference>
<dbReference type="FunFam" id="3.30.710.10:FF:000089">
    <property type="entry name" value="Zinc finger and BTB domain-containing protein 7B"/>
    <property type="match status" value="1"/>
</dbReference>
<dbReference type="FunFam" id="3.30.160.60:FF:000202">
    <property type="entry name" value="Zinc finger protein 574"/>
    <property type="match status" value="1"/>
</dbReference>
<dbReference type="Gene3D" id="3.30.160.60">
    <property type="entry name" value="Classic Zinc Finger"/>
    <property type="match status" value="4"/>
</dbReference>
<dbReference type="Gene3D" id="3.30.710.10">
    <property type="entry name" value="Potassium Channel Kv1.1, Chain A"/>
    <property type="match status" value="1"/>
</dbReference>
<dbReference type="InterPro" id="IPR000210">
    <property type="entry name" value="BTB/POZ_dom"/>
</dbReference>
<dbReference type="InterPro" id="IPR011333">
    <property type="entry name" value="SKP1/BTB/POZ_sf"/>
</dbReference>
<dbReference type="InterPro" id="IPR036236">
    <property type="entry name" value="Znf_C2H2_sf"/>
</dbReference>
<dbReference type="InterPro" id="IPR013087">
    <property type="entry name" value="Znf_C2H2_type"/>
</dbReference>
<dbReference type="InterPro" id="IPR050457">
    <property type="entry name" value="ZnFinger_BTB_dom_contain"/>
</dbReference>
<dbReference type="PANTHER" id="PTHR46105">
    <property type="entry name" value="AGAP004733-PA"/>
    <property type="match status" value="1"/>
</dbReference>
<dbReference type="PANTHER" id="PTHR46105:SF4">
    <property type="entry name" value="ZINC FINGER AND BTB DOMAIN-CONTAINING PROTEIN 7B"/>
    <property type="match status" value="1"/>
</dbReference>
<dbReference type="Pfam" id="PF00651">
    <property type="entry name" value="BTB"/>
    <property type="match status" value="1"/>
</dbReference>
<dbReference type="Pfam" id="PF00096">
    <property type="entry name" value="zf-C2H2"/>
    <property type="match status" value="2"/>
</dbReference>
<dbReference type="SMART" id="SM00225">
    <property type="entry name" value="BTB"/>
    <property type="match status" value="1"/>
</dbReference>
<dbReference type="SMART" id="SM00355">
    <property type="entry name" value="ZnF_C2H2"/>
    <property type="match status" value="4"/>
</dbReference>
<dbReference type="SUPFAM" id="SSF57667">
    <property type="entry name" value="beta-beta-alpha zinc fingers"/>
    <property type="match status" value="2"/>
</dbReference>
<dbReference type="SUPFAM" id="SSF54695">
    <property type="entry name" value="POZ domain"/>
    <property type="match status" value="1"/>
</dbReference>
<dbReference type="PROSITE" id="PS50097">
    <property type="entry name" value="BTB"/>
    <property type="match status" value="1"/>
</dbReference>
<dbReference type="PROSITE" id="PS00028">
    <property type="entry name" value="ZINC_FINGER_C2H2_1"/>
    <property type="match status" value="3"/>
</dbReference>
<dbReference type="PROSITE" id="PS50157">
    <property type="entry name" value="ZINC_FINGER_C2H2_2"/>
    <property type="match status" value="4"/>
</dbReference>
<organism>
    <name type="scientific">Mus musculus</name>
    <name type="common">Mouse</name>
    <dbReference type="NCBI Taxonomy" id="10090"/>
    <lineage>
        <taxon>Eukaryota</taxon>
        <taxon>Metazoa</taxon>
        <taxon>Chordata</taxon>
        <taxon>Craniata</taxon>
        <taxon>Vertebrata</taxon>
        <taxon>Euteleostomi</taxon>
        <taxon>Mammalia</taxon>
        <taxon>Eutheria</taxon>
        <taxon>Euarchontoglires</taxon>
        <taxon>Glires</taxon>
        <taxon>Rodentia</taxon>
        <taxon>Myomorpha</taxon>
        <taxon>Muroidea</taxon>
        <taxon>Muridae</taxon>
        <taxon>Murinae</taxon>
        <taxon>Mus</taxon>
        <taxon>Mus</taxon>
    </lineage>
</organism>
<protein>
    <recommendedName>
        <fullName evidence="16">Zinc finger and BTB domain-containing protein 7B</fullName>
    </recommendedName>
    <alternativeName>
        <fullName>Krueppel-related zinc finger protein cKrox</fullName>
        <shortName>c-Krox</shortName>
    </alternativeName>
    <alternativeName>
        <fullName>T-helper-inducing POZ/Krueppel-like factor</fullName>
    </alternativeName>
    <alternativeName>
        <fullName>Zinc finger protein 67</fullName>
        <shortName>Zfp-67</shortName>
    </alternativeName>
    <alternativeName>
        <fullName evidence="15">Zinc finger protein Th-POK</fullName>
    </alternativeName>
</protein>
<evidence type="ECO:0000250" key="1">
    <source>
        <dbReference type="UniProtKB" id="O15156"/>
    </source>
</evidence>
<evidence type="ECO:0000255" key="2">
    <source>
        <dbReference type="PROSITE-ProRule" id="PRU00037"/>
    </source>
</evidence>
<evidence type="ECO:0000255" key="3">
    <source>
        <dbReference type="PROSITE-ProRule" id="PRU00042"/>
    </source>
</evidence>
<evidence type="ECO:0000256" key="4">
    <source>
        <dbReference type="SAM" id="MobiDB-lite"/>
    </source>
</evidence>
<evidence type="ECO:0000269" key="5">
    <source>
    </source>
</evidence>
<evidence type="ECO:0000269" key="6">
    <source>
    </source>
</evidence>
<evidence type="ECO:0000269" key="7">
    <source>
    </source>
</evidence>
<evidence type="ECO:0000269" key="8">
    <source>
    </source>
</evidence>
<evidence type="ECO:0000269" key="9">
    <source>
    </source>
</evidence>
<evidence type="ECO:0000269" key="10">
    <source>
    </source>
</evidence>
<evidence type="ECO:0000269" key="11">
    <source>
    </source>
</evidence>
<evidence type="ECO:0000269" key="12">
    <source>
    </source>
</evidence>
<evidence type="ECO:0000269" key="13">
    <source>
    </source>
</evidence>
<evidence type="ECO:0000269" key="14">
    <source>
    </source>
</evidence>
<evidence type="ECO:0000303" key="15">
    <source>
    </source>
</evidence>
<evidence type="ECO:0000305" key="16"/>
<evidence type="ECO:0000312" key="17">
    <source>
        <dbReference type="MGI" id="MGI:102755"/>
    </source>
</evidence>
<comment type="function">
    <text evidence="5 6 8 9 10 11 12 13 14">Transcription regulator that acts as a key regulator of lineage commitment of immature T-cell precursors. Exerts distinct biological functions in the mammary epithelial cells and T cells in a tissue-specific manner (PubMed:15729333, PubMed:29420538). Necessary and sufficient for commitment of CD4 lineage, while its absence causes CD8 commitment. Development of immature T-cell precursors (thymocytes) to either the CD4 helper or CD8 killer T-cell lineages correlates precisely with their T-cell receptor specificity for major histocompatibility complex class II or class I molecules, respectively. Cross-antagonism between ZBTB7B and CBF complexes are determinative to CD4 versus CD8 cell fate decision (PubMed:15729333, PubMed:18258917, PubMed:23481257, PubMed:24880459). Suppresses RUNX3 expression and imposes CD4+ lineage fate by inducing the SOCS suppressors of cytokine signaling. induces, as a transcriptional activator, SOCS genes expression which represses RUNX3 expression and promotes the CD4+ lineage fate (PubMed:24880459). During CD4 lineage commitment, associates with multiple sites at the CD8 locus, acting as a negative regulator of the CD8 promoter and enhancers by epigenetic silencing through the recruitment of class II histone deacetylases, such as HDAC4 and HDAC5, to these loci (PubMed:22730529). Regulates the development of IL17-producing CD1d-restricted naural killer (NK) T cells (PubMed:23105140). Also functions as an important metabolic regulator in the lactating mammary glands. Critical feed-forward regulator of insulin signaling in mammary gland lactation, directly regulates expression of insulin receptor substrate-1 (IRS-1) and insulin-induced Akt-mTOR-SREBP signaling (PubMed:29420538). Transcriptional repressor of the collagen COL1A1 and COL1A2 genes. May also function as a repressor of fibronectin and possibly other extracellular matrix genes (PubMed:7937772). Potent driver of brown fat development, thermogenesis and cold-induced beige fat formation (PubMed:28784777). Recruits the brown fat lncRNA 1 (Blnc1):HNRNPU ribonucleoprotein complex to activate thermogenic gene expression in brown and beige adipocytes (PubMed:28784777).</text>
</comment>
<comment type="subunit">
    <text evidence="8 12">Homodimerizes (PubMed:22730529). Interacts with NCL, NEDD4 and YBX1 (PubMed:28784777). Interacts with HNRNPU (via RNA-binding RGG-box region); the interaction facilitates the recruitment of long non-coding RNA Blnc1 by ZBTB7B (PubMed:28784777). Interacts with HDAC4 and HDAC5; the interaction allows the recruitment of HDAC4 and HDAC5 on CD8 loci for deacetylation and possible inhibition of CD8 genes expression (PubMed:22730529).</text>
</comment>
<comment type="interaction">
    <interactant intactId="EBI-642868">
        <id>Q64321</id>
    </interactant>
    <interactant intactId="EBI-617954">
        <id>Q8CIH5</id>
        <label>Plcg2</label>
    </interactant>
    <organismsDiffer>false</organismsDiffer>
    <experiments>3</experiments>
</comment>
<comment type="interaction">
    <interactant intactId="EBI-642868">
        <id>Q64321</id>
    </interactant>
    <interactant intactId="EBI-6172136">
        <id>Q61029</id>
        <label>Tmpo</label>
    </interactant>
    <organismsDiffer>false</organismsDiffer>
    <experiments>2</experiments>
</comment>
<comment type="subcellular location">
    <subcellularLocation>
        <location evidence="8 13">Nucleus</location>
    </subcellularLocation>
</comment>
<comment type="tissue specificity">
    <text evidence="5 12 13 14">Widely expressed, with a higher level in skin. Expressed in thymus. Restricted to CD4 cells (mature single positive CD4(+) and intermediate CD4(+)CD8(+) cells). Expressed in the luminal epithelial cells in the mammary glands where is up-regulated at late pregnancy and lactation (PubMed:29420538). Expression is enriched in brown fat (PubMed:28784777).</text>
</comment>
<comment type="developmental stage">
    <text evidence="12 14">Expressed, beginning at 9.5 days of gestation and at 10.5 days in regions destined to become skin. In adult animals, expression is predominantly in skin (PubMed:7937772). Expression is significantly increased during brown adipocyte differentiation (PubMed:28784777).</text>
</comment>
<comment type="induction">
    <text evidence="13">Expression in mammary glands is induced by insulin.</text>
</comment>
<comment type="PTM">
    <text evidence="7">Acetylated directly and specifically by EP300. EP300-mediated acetylation of Lys-210, Lys-216 and Lys-339 stabilizes the protein by antagonizing ubiquitin conjugation.</text>
</comment>
<comment type="PTM">
    <text evidence="7">Ubiquitinated, leading to proteasomal degradation. Competes with acetylation on Lys-210, Lys-216 and Lys-339.</text>
</comment>
<comment type="disease">
    <text evidence="5 8 9 11">Defects in Zbtb7b are the cause of helper deficient disease (HD) or helpless disease. HD and helpless mice are distinguished by the virtual absence of peripheral T-cells of the CD4(+)CD8(-) major histocompatibility complex (MHC) class II-restricted T-helper subset due to a specific block in thymic development. The developmental defect is selective for CD4(+)CD8(-) cells; the maturation of CD4(-)CD8(+) and gamma delta T-cells is normal indicating that lineage commitment is specifically perturbed without affecting positive selection. In helpless disease, NKT cells are hyperproliferative, most lack CD4 and instead express CD8. The majority of NKT cells in the thymus produce IL17 with high frequency while very few produce IFNG or other cytokines (PubMed:23105140).</text>
</comment>
<comment type="disruption phenotype">
    <text evidence="12 13">Mutant females are unable to efficiently secrete milk lipid and to nurse the offspring. They show normal mammary gland morphogenesis in puberty and alveologenesis in pregnancy, but are defective in triggering the onset of lactation upon parturition with large cellular lipid droplets retained within alveolar epithelial cells (PubMed:29420538). Mice are more sensitive to cold temperature, with impaired cold-induced transcriptional remodeling in brown fat and diminished browning of inguinal white fat (PubMed:28784777).</text>
</comment>
<comment type="sequence caution" evidence="16">
    <conflict type="frameshift">
        <sequence resource="EMBL-CDS" id="AAA61956"/>
    </conflict>
</comment>
<comment type="sequence caution" evidence="16">
    <conflict type="miscellaneous discrepancy">
        <sequence resource="EMBL-CDS" id="AAA61956"/>
    </conflict>
    <text>Chimeric cDNA.</text>
</comment>
<comment type="sequence caution" evidence="16">
    <conflict type="frameshift">
        <sequence resource="EMBL-CDS" id="CAA85307"/>
    </conflict>
</comment>
<comment type="sequence caution" evidence="16">
    <conflict type="miscellaneous discrepancy">
        <sequence resource="EMBL-CDS" id="CAA85307"/>
    </conflict>
    <text>Chimeric cDNA.</text>
</comment>
<reference key="1">
    <citation type="journal article" date="2004" name="Genome Res.">
        <title>The status, quality, and expansion of the NIH full-length cDNA project: the Mammalian Gene Collection (MGC).</title>
        <authorList>
            <consortium name="The MGC Project Team"/>
        </authorList>
    </citation>
    <scope>NUCLEOTIDE SEQUENCE [LARGE SCALE MRNA]</scope>
    <source>
        <strain>FVB/N</strain>
        <tissue>Mammary tumor</tissue>
    </source>
</reference>
<reference key="2">
    <citation type="journal article" date="1994" name="Proc. Natl. Acad. Sci. U.S.A.">
        <title>c-Krox, a transcriptional regulator of type I collagen gene expression, is preferentially expressed in skin.</title>
        <authorList>
            <person name="Galera P."/>
            <person name="Musso M."/>
            <person name="Ducy P."/>
            <person name="Karsenty G."/>
        </authorList>
    </citation>
    <scope>NUCLEOTIDE SEQUENCE [MRNA] OF 85-544</scope>
    <scope>FUNCTION</scope>
    <scope>TISSUE SPECIFICITY</scope>
    <scope>DEVELOPMENTAL STAGE</scope>
</reference>
<reference key="3">
    <citation type="journal article" date="2005" name="Nature">
        <title>The zinc finger transcription factor Th-POK regulates CD4 versus CD8 T-cell lineage commitment.</title>
        <authorList>
            <person name="He X."/>
            <person name="He X."/>
            <person name="Dave V.P."/>
            <person name="Zhang Y."/>
            <person name="Hua X."/>
            <person name="Nicolas E."/>
            <person name="Xu W."/>
            <person name="Roe B.A."/>
            <person name="Kappes D.J."/>
        </authorList>
    </citation>
    <scope>FUNCTION</scope>
    <scope>TISSUE SPECIFICITY</scope>
    <scope>VARIANT HD GLY-389</scope>
</reference>
<reference key="4">
    <citation type="journal article" date="2008" name="Science">
        <title>Repression of the transcription factor Th-POK by Runx complexes in cytotoxic T cell development.</title>
        <authorList>
            <person name="Setoguchi R."/>
            <person name="Tachibana M."/>
            <person name="Naoe Y."/>
            <person name="Muroi S."/>
            <person name="Akiyama K."/>
            <person name="Tezuka C."/>
            <person name="Okuda T."/>
            <person name="Taniuchi I."/>
        </authorList>
    </citation>
    <scope>FUNCTION</scope>
</reference>
<reference key="5">
    <citation type="journal article" date="2010" name="J. Immunol.">
        <title>p300-mediated acetylation stabilizes the Th-inducing POK factor.</title>
        <authorList>
            <person name="Zhang M."/>
            <person name="Zhang J."/>
            <person name="Rui J."/>
            <person name="Liu X."/>
        </authorList>
    </citation>
    <scope>ACETYLATION AT LYS-210; LYS-216 AND LYS-339</scope>
    <scope>MUTAGENESIS OF LYS-207; LYS-210; LYS-216; LYS-339 AND LYS-343</scope>
    <scope>UBIQUITINATION AT LYS-210; LYS-216 AND LYS-339</scope>
</reference>
<reference key="6">
    <citation type="journal article" date="2012" name="J. Immunol.">
        <title>Epigenetic silencing of CD8 genes by ThPOK-mediated deacetylation during CD4 T cell differentiation.</title>
        <authorList>
            <person name="Rui J."/>
            <person name="Liu H."/>
            <person name="Zhu X."/>
            <person name="Cui Y."/>
            <person name="Liu X."/>
        </authorList>
    </citation>
    <scope>FUNCTION</scope>
    <scope>MUTAGENESIS OF LEU-21 AND 27-GLN-ARG-28</scope>
    <scope>VARIANT HD GLY-389</scope>
    <scope>CHARACTERIZATION OF VARIANT HD GLY-389</scope>
    <scope>HOMODIMERIZATION</scope>
    <scope>SUBCELLULAR LOCATION</scope>
    <scope>INTERACTION WITH HDAC4 AND HDAC5</scope>
</reference>
<reference key="7">
    <citation type="journal article" date="2012" name="J. Immunol.">
        <title>ZBTB7B (Th-POK) regulates the development of IL-17-producing CD1d-restricted mouse NKT cells.</title>
        <authorList>
            <person name="Enders A."/>
            <person name="Stankovic S."/>
            <person name="Teh C."/>
            <person name="Uldrich A.P."/>
            <person name="Yabas M."/>
            <person name="Juelich T."/>
            <person name="Altin J.A."/>
            <person name="Frankenreiter S."/>
            <person name="Bergmann H."/>
            <person name="Roots C.M."/>
            <person name="Kyparissoudis K."/>
            <person name="Goodnow C.C."/>
            <person name="Godfrey D.I."/>
        </authorList>
    </citation>
    <scope>FUNCTION</scope>
    <scope>VARIANT HELPLESS ARG-102</scope>
    <scope>CHARACTERIZATION OF VARIANT ARG-102</scope>
</reference>
<reference key="8">
    <citation type="journal article" date="2013" name="EMBO J.">
        <title>Epigenetic Thpok silencing limits the time window to choose CD4(+) helper-lineage fate in the thymus.</title>
        <authorList>
            <person name="Tanaka H."/>
            <person name="Naito T."/>
            <person name="Muroi S."/>
            <person name="Seo W."/>
            <person name="Chihara R."/>
            <person name="Miyamoto C."/>
            <person name="Kominami R."/>
            <person name="Taniuchi I."/>
        </authorList>
    </citation>
    <scope>FUNCTION</scope>
</reference>
<reference key="9">
    <citation type="journal article" date="2014" name="Nat. Immunol.">
        <title>The transcription factor ThPOK suppresses Runx3 and imposes CD4(+) lineage fate by inducing the SOCS suppressors of cytokine signaling.</title>
        <authorList>
            <person name="Luckey M.A."/>
            <person name="Kimura M.Y."/>
            <person name="Waickman A.T."/>
            <person name="Feigenbaum L."/>
            <person name="Singer A."/>
            <person name="Park J.H."/>
        </authorList>
    </citation>
    <scope>FUNCTION</scope>
    <scope>VARIANT HD GLY-389</scope>
</reference>
<reference key="10">
    <citation type="journal article" date="2017" name="Proc. Natl. Acad. Sci. U.S.A.">
        <title>Zbtb7b engages the long noncoding RNA Blnc1 to drive brown and beige fat development and thermogenesis.</title>
        <authorList>
            <person name="Li S."/>
            <person name="Mi L."/>
            <person name="Yu L."/>
            <person name="Yu Q."/>
            <person name="Liu T."/>
            <person name="Wang G.X."/>
            <person name="Zhao X.Y."/>
            <person name="Wu J."/>
            <person name="Lin J.D."/>
        </authorList>
    </citation>
    <scope>FUNCTION</scope>
    <scope>DISRUPTION PHENOTYPE</scope>
    <scope>TISSUE SPECIFICITY</scope>
    <scope>DEVELOPMENTAL STAGE</scope>
    <scope>INTERACTION WITH HNRNPU; NCL; NEDD4 AND YBX1</scope>
</reference>
<reference key="11">
    <citation type="journal article" date="2018" name="PLoS Genet.">
        <title>Th-POK regulates mammary gland lactation through mTOR-SREBP pathway.</title>
        <authorList>
            <person name="Zhang R."/>
            <person name="Ma H."/>
            <person name="Gao Y."/>
            <person name="Wu Y."/>
            <person name="Qiao Y."/>
            <person name="Geng A."/>
            <person name="Cai C."/>
            <person name="Han Y."/>
            <person name="Zeng Y.A."/>
            <person name="Liu X."/>
            <person name="Ge G."/>
        </authorList>
    </citation>
    <scope>FUNCTION</scope>
    <scope>DISRUPTION PHENOTYPE</scope>
    <scope>TISSUE SPECIFICITY</scope>
    <scope>INDUCTION BY INSULIN</scope>
    <scope>SUBCELLULAR LOCATION</scope>
</reference>
<accession>Q64321</accession>
<accession>Q80VV5</accession>
<keyword id="KW-0007">Acetylation</keyword>
<keyword id="KW-0217">Developmental protein</keyword>
<keyword id="KW-0221">Differentiation</keyword>
<keyword id="KW-0225">Disease variant</keyword>
<keyword id="KW-0238">DNA-binding</keyword>
<keyword id="KW-1017">Isopeptide bond</keyword>
<keyword id="KW-0479">Metal-binding</keyword>
<keyword id="KW-0539">Nucleus</keyword>
<keyword id="KW-0597">Phosphoprotein</keyword>
<keyword id="KW-1185">Reference proteome</keyword>
<keyword id="KW-0677">Repeat</keyword>
<keyword id="KW-0678">Repressor</keyword>
<keyword id="KW-0804">Transcription</keyword>
<keyword id="KW-0805">Transcription regulation</keyword>
<keyword id="KW-0832">Ubl conjugation</keyword>
<keyword id="KW-0862">Zinc</keyword>
<keyword id="KW-0863">Zinc-finger</keyword>
<gene>
    <name evidence="17" type="primary">Zbtb7b</name>
    <name evidence="15" type="synonym">Thpok</name>
    <name type="synonym">Zfp67</name>
</gene>
<feature type="chain" id="PRO_0000047720" description="Zinc finger and BTB domain-containing protein 7B">
    <location>
        <begin position="1"/>
        <end position="544"/>
    </location>
</feature>
<feature type="domain" description="BTB" evidence="2">
    <location>
        <begin position="34"/>
        <end position="115"/>
    </location>
</feature>
<feature type="zinc finger region" description="C2H2-type 1" evidence="3">
    <location>
        <begin position="350"/>
        <end position="372"/>
    </location>
</feature>
<feature type="zinc finger region" description="C2H2-type 2" evidence="3">
    <location>
        <begin position="378"/>
        <end position="400"/>
    </location>
</feature>
<feature type="zinc finger region" description="C2H2-type 3" evidence="3">
    <location>
        <begin position="406"/>
        <end position="428"/>
    </location>
</feature>
<feature type="zinc finger region" description="C2H2-type 4; atypical" evidence="3">
    <location>
        <begin position="434"/>
        <end position="458"/>
    </location>
</feature>
<feature type="region of interest" description="Disordered" evidence="4">
    <location>
        <begin position="171"/>
        <end position="221"/>
    </location>
</feature>
<feature type="region of interest" description="Disordered" evidence="4">
    <location>
        <begin position="244"/>
        <end position="314"/>
    </location>
</feature>
<feature type="region of interest" description="Required for interaction with and acetylation by EP300" evidence="7">
    <location>
        <begin position="348"/>
        <end position="404"/>
    </location>
</feature>
<feature type="region of interest" description="Disordered" evidence="4">
    <location>
        <begin position="465"/>
        <end position="493"/>
    </location>
</feature>
<feature type="region of interest" description="Disordered" evidence="4">
    <location>
        <begin position="507"/>
        <end position="544"/>
    </location>
</feature>
<feature type="compositionally biased region" description="Pro residues" evidence="4">
    <location>
        <begin position="186"/>
        <end position="200"/>
    </location>
</feature>
<feature type="compositionally biased region" description="Basic residues" evidence="4">
    <location>
        <begin position="201"/>
        <end position="210"/>
    </location>
</feature>
<feature type="compositionally biased region" description="Acidic residues" evidence="4">
    <location>
        <begin position="277"/>
        <end position="286"/>
    </location>
</feature>
<feature type="compositionally biased region" description="Low complexity" evidence="4">
    <location>
        <begin position="511"/>
        <end position="522"/>
    </location>
</feature>
<feature type="compositionally biased region" description="Low complexity" evidence="4">
    <location>
        <begin position="531"/>
        <end position="544"/>
    </location>
</feature>
<feature type="modified residue" description="Phosphoserine" evidence="1">
    <location>
        <position position="150"/>
    </location>
</feature>
<feature type="modified residue" description="N6-acetyllysine; by EP300; alternate" evidence="7">
    <location>
        <position position="210"/>
    </location>
</feature>
<feature type="modified residue" description="N6-acetyllysine; by EP300; alternate" evidence="7">
    <location>
        <position position="216"/>
    </location>
</feature>
<feature type="modified residue" description="N6-acetyllysine; by EP300; alternate" evidence="7">
    <location>
        <position position="339"/>
    </location>
</feature>
<feature type="modified residue" description="Phosphothreonine" evidence="1">
    <location>
        <position position="373"/>
    </location>
</feature>
<feature type="cross-link" description="Glycyl lysine isopeptide (Lys-Gly) (interchain with G-Cter in ubiquitin); alternate" evidence="7">
    <location>
        <position position="210"/>
    </location>
</feature>
<feature type="cross-link" description="Glycyl lysine isopeptide (Lys-Gly) (interchain with G-Cter in ubiquitin); alternate" evidence="7">
    <location>
        <position position="216"/>
    </location>
</feature>
<feature type="cross-link" description="Glycyl lysine isopeptide (Lys-Gly) (interchain with G-Cter in ubiquitin); alternate" evidence="7">
    <location>
        <position position="339"/>
    </location>
</feature>
<feature type="sequence variant" description="In helpless." evidence="9">
    <original>L</original>
    <variation>R</variation>
    <location>
        <position position="102"/>
    </location>
</feature>
<feature type="sequence variant" description="In HD; disrupts sequence-specific DNA-binding; no effect on homodimerization or interaction with HDAC4 and HDAC5." evidence="5 8 11">
    <original>R</original>
    <variation>G</variation>
    <location>
        <position position="389"/>
    </location>
</feature>
<feature type="mutagenesis site" description="Fails to repress CD8 expression. Abolishes interaction with HDAC4 and HDAC5. No effect on homodimerization and DNA binding." evidence="8">
    <original>L</original>
    <variation>S</variation>
    <location>
        <position position="21"/>
    </location>
</feature>
<feature type="mutagenesis site" description="Fails to repress CD8 expression. Abolishes interaction with HDAC4 and HDAC5. No effect on homodimerization and DNA binding." evidence="8">
    <original>QR</original>
    <variation>AL</variation>
    <location>
        <begin position="27"/>
        <end position="28"/>
    </location>
</feature>
<feature type="mutagenesis site" description="No effect on acetylation levels. Slightly decreases acetylation levels; when associated with R-210. Slightly decreases acetylation levels; when associated with R-216." evidence="7">
    <original>K</original>
    <variation>R</variation>
    <location>
        <position position="207"/>
    </location>
</feature>
<feature type="mutagenesis site" description="Slightly decreases acetylation levels. No effect on protein stability. Slightly decreases acetylation levels; when associated with R-207. Slightly decreases acetylation levels and increases protein stability; when associated with R-216. Increases protein stability; when associated with R-339. Decreases acetylation levels; when associated with R-216 and R-343. Abolishes acetylation levels and ubiquitination and highly increases protein stability; when associated with R-216 and R-339." evidence="7">
    <original>K</original>
    <variation>R</variation>
    <location>
        <position position="210"/>
    </location>
</feature>
<feature type="mutagenesis site" description="Slightly decreases acetylation levels. No effect on protein stability. Slightly decreases acetylation levels; when associated with R-207. Slightly decreases acetylation levels and increases protein stability; when associated with R-210. Increases protein stability; when associated with R-339. Decreases acetylation levels; when associated with R-210 and R-343. Abolishes acetylation levels and ubiquitination and highly increases protein stability; when associated with R-210 and R-339." evidence="7">
    <original>K</original>
    <variation>R</variation>
    <location>
        <position position="216"/>
    </location>
</feature>
<feature type="mutagenesis site" description="Slightly decreases acetylation levels. Slightly increases protein stability. Slightly decreases acetylation levels; when associated with R-343. Increases protein stability; when associated with R-210 or R-216. Abolishes acetylation levels and ubiquitination and highly increases protein stability; when associated with R-210 and R-216." evidence="7">
    <original>K</original>
    <variation>R</variation>
    <location>
        <position position="339"/>
    </location>
</feature>
<feature type="mutagenesis site" description="No effect on acetylation levels. Slightly decreases acetylation levels; when associated with R-339. Decreases acetylation levels; when associated with R-210 and R-216." evidence="7">
    <original>K</original>
    <variation>R</variation>
    <location>
        <position position="343"/>
    </location>
</feature>
<feature type="sequence conflict" description="In Ref. 2; AAA61956/CAA85307." evidence="16" ref="2">
    <original>A</original>
    <variation>T</variation>
    <location>
        <position position="268"/>
    </location>
</feature>
<name>ZBT7B_MOUSE</name>
<proteinExistence type="evidence at protein level"/>